<comment type="subcellular location">
    <subcellularLocation>
        <location evidence="1">Secreted</location>
    </subcellularLocation>
</comment>
<comment type="tissue specificity">
    <text>Expressed by the venom duct.</text>
</comment>
<comment type="domain">
    <text evidence="1">The presence of a 'disulfide through disulfide knot' structurally defines this protein as a knottin.</text>
</comment>
<comment type="domain">
    <text>The cysteine framework is VI/VII (C-C-CC-C-C).</text>
</comment>
<comment type="similarity">
    <text evidence="3">Belongs to the conotoxin O2 superfamily.</text>
</comment>
<evidence type="ECO:0000250" key="1"/>
<evidence type="ECO:0000255" key="2"/>
<evidence type="ECO:0000305" key="3"/>
<protein>
    <recommendedName>
        <fullName>Conotoxin VnMEKL-021</fullName>
    </recommendedName>
</protein>
<keyword id="KW-0165">Cleavage on pair of basic residues</keyword>
<keyword id="KW-1015">Disulfide bond</keyword>
<keyword id="KW-0960">Knottin</keyword>
<keyword id="KW-0528">Neurotoxin</keyword>
<keyword id="KW-0964">Secreted</keyword>
<keyword id="KW-0732">Signal</keyword>
<keyword id="KW-0800">Toxin</keyword>
<proteinExistence type="evidence at transcript level"/>
<accession>Q9BPC6</accession>
<feature type="signal peptide" evidence="2">
    <location>
        <begin position="1"/>
        <end position="19"/>
    </location>
</feature>
<feature type="propeptide" id="PRO_0000404812" evidence="2">
    <location>
        <begin position="20"/>
        <end position="37"/>
    </location>
</feature>
<feature type="peptide" id="PRO_0000404813" description="Conotoxin VnMEKL-021" evidence="2">
    <location>
        <begin position="41"/>
        <end position="76"/>
    </location>
</feature>
<feature type="disulfide bond" evidence="1">
    <location>
        <begin position="51"/>
        <end position="65"/>
    </location>
</feature>
<feature type="disulfide bond" evidence="1">
    <location>
        <begin position="58"/>
        <end position="69"/>
    </location>
</feature>
<feature type="disulfide bond" evidence="1">
    <location>
        <begin position="64"/>
        <end position="73"/>
    </location>
</feature>
<name>O264_CONVE</name>
<sequence length="76" mass="8461">MQKLTILLLVAAVLMSTQALIKGGGEKRPKEKIKFLSKRRTNAERWWEGDCTGWLDGCTSPAECCTAVCDATCKLW</sequence>
<organism>
    <name type="scientific">Conus ventricosus</name>
    <name type="common">Mediterranean cone</name>
    <dbReference type="NCBI Taxonomy" id="117992"/>
    <lineage>
        <taxon>Eukaryota</taxon>
        <taxon>Metazoa</taxon>
        <taxon>Spiralia</taxon>
        <taxon>Lophotrochozoa</taxon>
        <taxon>Mollusca</taxon>
        <taxon>Gastropoda</taxon>
        <taxon>Caenogastropoda</taxon>
        <taxon>Neogastropoda</taxon>
        <taxon>Conoidea</taxon>
        <taxon>Conidae</taxon>
        <taxon>Conus</taxon>
        <taxon>Lautoconus</taxon>
    </lineage>
</organism>
<reference key="1">
    <citation type="journal article" date="2001" name="Mol. Biol. Evol.">
        <title>Mechanisms for evolving hypervariability: the case of conopeptides.</title>
        <authorList>
            <person name="Conticello S.G."/>
            <person name="Gilad Y."/>
            <person name="Avidan N."/>
            <person name="Ben-Asher E."/>
            <person name="Levy Z."/>
            <person name="Fainzilber M."/>
        </authorList>
    </citation>
    <scope>NUCLEOTIDE SEQUENCE [MRNA]</scope>
    <source>
        <tissue>Venom duct</tissue>
    </source>
</reference>
<dbReference type="EMBL" id="AF215008">
    <property type="protein sequence ID" value="AAG60436.1"/>
    <property type="molecule type" value="mRNA"/>
</dbReference>
<dbReference type="ConoServer" id="695">
    <property type="toxin name" value="Vn6.4 precursor"/>
</dbReference>
<dbReference type="GO" id="GO:0005576">
    <property type="term" value="C:extracellular region"/>
    <property type="evidence" value="ECO:0007669"/>
    <property type="project" value="UniProtKB-SubCell"/>
</dbReference>
<dbReference type="GO" id="GO:0008200">
    <property type="term" value="F:ion channel inhibitor activity"/>
    <property type="evidence" value="ECO:0007669"/>
    <property type="project" value="InterPro"/>
</dbReference>
<dbReference type="GO" id="GO:0090729">
    <property type="term" value="F:toxin activity"/>
    <property type="evidence" value="ECO:0007669"/>
    <property type="project" value="UniProtKB-KW"/>
</dbReference>
<dbReference type="InterPro" id="IPR004214">
    <property type="entry name" value="Conotoxin"/>
</dbReference>
<dbReference type="Pfam" id="PF02950">
    <property type="entry name" value="Conotoxin"/>
    <property type="match status" value="1"/>
</dbReference>